<name>AROB_CAMC5</name>
<keyword id="KW-0028">Amino-acid biosynthesis</keyword>
<keyword id="KW-0057">Aromatic amino acid biosynthesis</keyword>
<keyword id="KW-0170">Cobalt</keyword>
<keyword id="KW-0963">Cytoplasm</keyword>
<keyword id="KW-0456">Lyase</keyword>
<keyword id="KW-0479">Metal-binding</keyword>
<keyword id="KW-0520">NAD</keyword>
<keyword id="KW-0547">Nucleotide-binding</keyword>
<keyword id="KW-1185">Reference proteome</keyword>
<keyword id="KW-0862">Zinc</keyword>
<gene>
    <name evidence="1" type="primary">aroB</name>
    <name type="ordered locus">Ccur92_09290</name>
    <name type="ORF">CCV52592_1438</name>
</gene>
<accession>A7GYE1</accession>
<protein>
    <recommendedName>
        <fullName evidence="1">3-dehydroquinate synthase</fullName>
        <shortName evidence="1">DHQS</shortName>
        <ecNumber evidence="1">4.2.3.4</ecNumber>
    </recommendedName>
</protein>
<feature type="chain" id="PRO_1000117476" description="3-dehydroquinate synthase">
    <location>
        <begin position="1"/>
        <end position="346"/>
    </location>
</feature>
<feature type="binding site" evidence="1">
    <location>
        <begin position="62"/>
        <end position="67"/>
    </location>
    <ligand>
        <name>NAD(+)</name>
        <dbReference type="ChEBI" id="CHEBI:57540"/>
    </ligand>
</feature>
<feature type="binding site" evidence="1">
    <location>
        <begin position="96"/>
        <end position="100"/>
    </location>
    <ligand>
        <name>NAD(+)</name>
        <dbReference type="ChEBI" id="CHEBI:57540"/>
    </ligand>
</feature>
<feature type="binding site" evidence="1">
    <location>
        <begin position="120"/>
        <end position="121"/>
    </location>
    <ligand>
        <name>NAD(+)</name>
        <dbReference type="ChEBI" id="CHEBI:57540"/>
    </ligand>
</feature>
<feature type="binding site" evidence="1">
    <location>
        <position position="133"/>
    </location>
    <ligand>
        <name>NAD(+)</name>
        <dbReference type="ChEBI" id="CHEBI:57540"/>
    </ligand>
</feature>
<feature type="binding site" evidence="1">
    <location>
        <position position="142"/>
    </location>
    <ligand>
        <name>NAD(+)</name>
        <dbReference type="ChEBI" id="CHEBI:57540"/>
    </ligand>
</feature>
<feature type="binding site" evidence="1">
    <location>
        <begin position="160"/>
        <end position="163"/>
    </location>
    <ligand>
        <name>NAD(+)</name>
        <dbReference type="ChEBI" id="CHEBI:57540"/>
    </ligand>
</feature>
<feature type="binding site" evidence="1">
    <location>
        <position position="175"/>
    </location>
    <ligand>
        <name>Zn(2+)</name>
        <dbReference type="ChEBI" id="CHEBI:29105"/>
    </ligand>
</feature>
<feature type="binding site" evidence="1">
    <location>
        <position position="234"/>
    </location>
    <ligand>
        <name>Zn(2+)</name>
        <dbReference type="ChEBI" id="CHEBI:29105"/>
    </ligand>
</feature>
<feature type="binding site" evidence="1">
    <location>
        <position position="251"/>
    </location>
    <ligand>
        <name>Zn(2+)</name>
        <dbReference type="ChEBI" id="CHEBI:29105"/>
    </ligand>
</feature>
<dbReference type="EC" id="4.2.3.4" evidence="1"/>
<dbReference type="EMBL" id="CP000767">
    <property type="protein sequence ID" value="EAT99536.2"/>
    <property type="molecule type" value="Genomic_DNA"/>
</dbReference>
<dbReference type="RefSeq" id="WP_011992275.1">
    <property type="nucleotide sequence ID" value="NC_009715.2"/>
</dbReference>
<dbReference type="SMR" id="A7GYE1"/>
<dbReference type="STRING" id="360105.CCV52592_1438"/>
<dbReference type="KEGG" id="ccv:CCV52592_1438"/>
<dbReference type="HOGENOM" id="CLU_001201_0_2_7"/>
<dbReference type="OrthoDB" id="9806583at2"/>
<dbReference type="UniPathway" id="UPA00053">
    <property type="reaction ID" value="UER00085"/>
</dbReference>
<dbReference type="Proteomes" id="UP000006380">
    <property type="component" value="Chromosome"/>
</dbReference>
<dbReference type="GO" id="GO:0005737">
    <property type="term" value="C:cytoplasm"/>
    <property type="evidence" value="ECO:0007669"/>
    <property type="project" value="UniProtKB-SubCell"/>
</dbReference>
<dbReference type="GO" id="GO:0003856">
    <property type="term" value="F:3-dehydroquinate synthase activity"/>
    <property type="evidence" value="ECO:0007669"/>
    <property type="project" value="UniProtKB-UniRule"/>
</dbReference>
<dbReference type="GO" id="GO:0046872">
    <property type="term" value="F:metal ion binding"/>
    <property type="evidence" value="ECO:0007669"/>
    <property type="project" value="UniProtKB-KW"/>
</dbReference>
<dbReference type="GO" id="GO:0000166">
    <property type="term" value="F:nucleotide binding"/>
    <property type="evidence" value="ECO:0007669"/>
    <property type="project" value="UniProtKB-KW"/>
</dbReference>
<dbReference type="GO" id="GO:0008652">
    <property type="term" value="P:amino acid biosynthetic process"/>
    <property type="evidence" value="ECO:0007669"/>
    <property type="project" value="UniProtKB-KW"/>
</dbReference>
<dbReference type="GO" id="GO:0009073">
    <property type="term" value="P:aromatic amino acid family biosynthetic process"/>
    <property type="evidence" value="ECO:0007669"/>
    <property type="project" value="UniProtKB-KW"/>
</dbReference>
<dbReference type="GO" id="GO:0009423">
    <property type="term" value="P:chorismate biosynthetic process"/>
    <property type="evidence" value="ECO:0007669"/>
    <property type="project" value="UniProtKB-UniRule"/>
</dbReference>
<dbReference type="CDD" id="cd08195">
    <property type="entry name" value="DHQS"/>
    <property type="match status" value="1"/>
</dbReference>
<dbReference type="FunFam" id="3.40.50.1970:FF:000007">
    <property type="entry name" value="Pentafunctional AROM polypeptide"/>
    <property type="match status" value="1"/>
</dbReference>
<dbReference type="Gene3D" id="3.40.50.1970">
    <property type="match status" value="1"/>
</dbReference>
<dbReference type="Gene3D" id="1.20.1090.10">
    <property type="entry name" value="Dehydroquinate synthase-like - alpha domain"/>
    <property type="match status" value="1"/>
</dbReference>
<dbReference type="HAMAP" id="MF_00110">
    <property type="entry name" value="DHQ_synthase"/>
    <property type="match status" value="1"/>
</dbReference>
<dbReference type="InterPro" id="IPR050071">
    <property type="entry name" value="Dehydroquinate_synthase"/>
</dbReference>
<dbReference type="InterPro" id="IPR016037">
    <property type="entry name" value="DHQ_synth_AroB"/>
</dbReference>
<dbReference type="InterPro" id="IPR030963">
    <property type="entry name" value="DHQ_synth_fam"/>
</dbReference>
<dbReference type="InterPro" id="IPR030960">
    <property type="entry name" value="DHQS/DOIS_N"/>
</dbReference>
<dbReference type="InterPro" id="IPR056179">
    <property type="entry name" value="DHQS_C"/>
</dbReference>
<dbReference type="NCBIfam" id="TIGR01357">
    <property type="entry name" value="aroB"/>
    <property type="match status" value="1"/>
</dbReference>
<dbReference type="PANTHER" id="PTHR43622">
    <property type="entry name" value="3-DEHYDROQUINATE SYNTHASE"/>
    <property type="match status" value="1"/>
</dbReference>
<dbReference type="PANTHER" id="PTHR43622:SF7">
    <property type="entry name" value="3-DEHYDROQUINATE SYNTHASE, CHLOROPLASTIC"/>
    <property type="match status" value="1"/>
</dbReference>
<dbReference type="Pfam" id="PF01761">
    <property type="entry name" value="DHQ_synthase"/>
    <property type="match status" value="1"/>
</dbReference>
<dbReference type="Pfam" id="PF24621">
    <property type="entry name" value="DHQS_C"/>
    <property type="match status" value="1"/>
</dbReference>
<dbReference type="PIRSF" id="PIRSF001455">
    <property type="entry name" value="DHQ_synth"/>
    <property type="match status" value="1"/>
</dbReference>
<dbReference type="SUPFAM" id="SSF56796">
    <property type="entry name" value="Dehydroquinate synthase-like"/>
    <property type="match status" value="1"/>
</dbReference>
<proteinExistence type="inferred from homology"/>
<comment type="function">
    <text evidence="1">Catalyzes the conversion of 3-deoxy-D-arabino-heptulosonate 7-phosphate (DAHP) to dehydroquinate (DHQ).</text>
</comment>
<comment type="catalytic activity">
    <reaction evidence="1">
        <text>7-phospho-2-dehydro-3-deoxy-D-arabino-heptonate = 3-dehydroquinate + phosphate</text>
        <dbReference type="Rhea" id="RHEA:21968"/>
        <dbReference type="ChEBI" id="CHEBI:32364"/>
        <dbReference type="ChEBI" id="CHEBI:43474"/>
        <dbReference type="ChEBI" id="CHEBI:58394"/>
        <dbReference type="EC" id="4.2.3.4"/>
    </reaction>
</comment>
<comment type="cofactor">
    <cofactor evidence="1">
        <name>Co(2+)</name>
        <dbReference type="ChEBI" id="CHEBI:48828"/>
    </cofactor>
    <cofactor evidence="1">
        <name>Zn(2+)</name>
        <dbReference type="ChEBI" id="CHEBI:29105"/>
    </cofactor>
    <text evidence="1">Binds 1 divalent metal cation per subunit. Can use either Co(2+) or Zn(2+).</text>
</comment>
<comment type="cofactor">
    <cofactor evidence="1">
        <name>NAD(+)</name>
        <dbReference type="ChEBI" id="CHEBI:57540"/>
    </cofactor>
</comment>
<comment type="pathway">
    <text evidence="1">Metabolic intermediate biosynthesis; chorismate biosynthesis; chorismate from D-erythrose 4-phosphate and phosphoenolpyruvate: step 2/7.</text>
</comment>
<comment type="subcellular location">
    <subcellularLocation>
        <location evidence="1">Cytoplasm</location>
    </subcellularLocation>
</comment>
<comment type="similarity">
    <text evidence="1">Belongs to the sugar phosphate cyclases superfamily. Dehydroquinate synthase family.</text>
</comment>
<organism>
    <name type="scientific">Campylobacter curvus (strain 525.92)</name>
    <dbReference type="NCBI Taxonomy" id="360105"/>
    <lineage>
        <taxon>Bacteria</taxon>
        <taxon>Pseudomonadati</taxon>
        <taxon>Campylobacterota</taxon>
        <taxon>Epsilonproteobacteria</taxon>
        <taxon>Campylobacterales</taxon>
        <taxon>Campylobacteraceae</taxon>
        <taxon>Campylobacter</taxon>
    </lineage>
</organism>
<evidence type="ECO:0000255" key="1">
    <source>
        <dbReference type="HAMAP-Rule" id="MF_00110"/>
    </source>
</evidence>
<reference key="1">
    <citation type="submission" date="2007-07" db="EMBL/GenBank/DDBJ databases">
        <title>Genome sequence of Campylobacter curvus 525.92 isolated from human feces.</title>
        <authorList>
            <person name="Fouts D.E."/>
            <person name="Mongodin E.F."/>
            <person name="Puiu D."/>
            <person name="Sebastian Y."/>
            <person name="Miller W.G."/>
            <person name="Mandrell R.E."/>
            <person name="Lastovica A.J."/>
            <person name="Nelson K.E."/>
        </authorList>
    </citation>
    <scope>NUCLEOTIDE SEQUENCE [LARGE SCALE GENOMIC DNA]</scope>
    <source>
        <strain>525.92</strain>
    </source>
</reference>
<sequence>MQIRLNLEQKKYGYNVYINELERIEIKGKTAIVTNPKIAGLHLNTLLNSLKCDEYFIISVPDGEEYKNLATIELILEQLFTSKLDRSSTLIAFGGGVISDMTGFAASIYERGINFINIPTTLLAQVDASVGGKTGVNNKFGKNMIGSFYQPKAVYCESKFLRTLAFREFNAGLAEAVKMAVTFDKEMFEWLENVTLDEEQNLAKLVERSVLIKARVVEADEKERGLRALLNYGHTFAHVIENETGYKKYLHGEAVAIGMNMANSLSVKLGLMSEKDALRIKELLAKFSLPTHYVLRDESAFYEAFMLDKKTQEGSVKFILSNGIGSAVMKNDIKRDDVIKILREFK</sequence>